<evidence type="ECO:0000255" key="1">
    <source>
        <dbReference type="HAMAP-Rule" id="MF_00123"/>
    </source>
</evidence>
<sequence>MNIIDQVKQTLVEEIAASINKAGLADEIPDIKIEVPKDTKNGDYATNIAMVLTKIAKRNPREIAQAIVDNLDTEKAHVKQIDIAGPGFINFYLDNQYLTAIIPEAIEKGDQFGHVNESKGQNVLLEYVSANPTGDLHIGHARNAAVGDALANILTAAGYNVTREYYINDAGNQITNLARSIETRFFEALGDNSYSMPEDGYNGKDIIEIGKDLAEKHPEIKDYSEEARLKEFRKLGVEYEMAKLKNDLAEFNTHFDNWFSETSLYEKGEILEVLAKMKELGYTYEADGATWLRTTDFKDDKDRVLIKNDGTYTYFLPDIAYHFDKVKRGNDILIDLFGADHHGYINRLKASLETFGVDSNRLEIQIMQMVRLMENGKEVKMSKRTGNAITLREIMDEVGVDAARYFLTMRSPDSHFDFDMELAKEQSQDNPVYYAQYAHARICSILKQAKEQGIEVTAANDFTTITNEKAIELLKKVADFEPTIESAAEHRSAHRITNYIQDLAAHFHKFYNAEKVLTDDIEKTKAHVAMIEAVRITLKNALAMVGVSAPESM</sequence>
<reference key="1">
    <citation type="journal article" date="2001" name="Lancet">
        <title>Whole genome sequencing of meticillin-resistant Staphylococcus aureus.</title>
        <authorList>
            <person name="Kuroda M."/>
            <person name="Ohta T."/>
            <person name="Uchiyama I."/>
            <person name="Baba T."/>
            <person name="Yuzawa H."/>
            <person name="Kobayashi I."/>
            <person name="Cui L."/>
            <person name="Oguchi A."/>
            <person name="Aoki K."/>
            <person name="Nagai Y."/>
            <person name="Lian J.-Q."/>
            <person name="Ito T."/>
            <person name="Kanamori M."/>
            <person name="Matsumaru H."/>
            <person name="Maruyama A."/>
            <person name="Murakami H."/>
            <person name="Hosoyama A."/>
            <person name="Mizutani-Ui Y."/>
            <person name="Takahashi N.K."/>
            <person name="Sawano T."/>
            <person name="Inoue R."/>
            <person name="Kaito C."/>
            <person name="Sekimizu K."/>
            <person name="Hirakawa H."/>
            <person name="Kuhara S."/>
            <person name="Goto S."/>
            <person name="Yabuzaki J."/>
            <person name="Kanehisa M."/>
            <person name="Yamashita A."/>
            <person name="Oshima K."/>
            <person name="Furuya K."/>
            <person name="Yoshino C."/>
            <person name="Shiba T."/>
            <person name="Hattori M."/>
            <person name="Ogasawara N."/>
            <person name="Hayashi H."/>
            <person name="Hiramatsu K."/>
        </authorList>
    </citation>
    <scope>NUCLEOTIDE SEQUENCE [LARGE SCALE GENOMIC DNA]</scope>
    <source>
        <strain>N315</strain>
    </source>
</reference>
<reference key="2">
    <citation type="journal article" date="2005" name="J. Microbiol. Methods">
        <title>Correlation of proteomic and transcriptomic profiles of Staphylococcus aureus during the post-exponential phase of growth.</title>
        <authorList>
            <person name="Scherl A."/>
            <person name="Francois P."/>
            <person name="Bento M."/>
            <person name="Deshusses J.M."/>
            <person name="Charbonnier Y."/>
            <person name="Converset V."/>
            <person name="Huyghe A."/>
            <person name="Walter N."/>
            <person name="Hoogland C."/>
            <person name="Appel R.D."/>
            <person name="Sanchez J.-C."/>
            <person name="Zimmermann-Ivol C.G."/>
            <person name="Corthals G.L."/>
            <person name="Hochstrasser D.F."/>
            <person name="Schrenzel J."/>
        </authorList>
    </citation>
    <scope>IDENTIFICATION BY MASS SPECTROMETRY</scope>
    <source>
        <strain>N315</strain>
    </source>
</reference>
<reference key="3">
    <citation type="submission" date="2007-10" db="UniProtKB">
        <title>Shotgun proteomic analysis of total and membrane protein extracts of S. aureus strain N315.</title>
        <authorList>
            <person name="Vaezzadeh A.R."/>
            <person name="Deshusses J."/>
            <person name="Lescuyer P."/>
            <person name="Hochstrasser D.F."/>
        </authorList>
    </citation>
    <scope>IDENTIFICATION BY MASS SPECTROMETRY [LARGE SCALE ANALYSIS]</scope>
    <source>
        <strain>N315</strain>
    </source>
</reference>
<keyword id="KW-0030">Aminoacyl-tRNA synthetase</keyword>
<keyword id="KW-0067">ATP-binding</keyword>
<keyword id="KW-0963">Cytoplasm</keyword>
<keyword id="KW-0436">Ligase</keyword>
<keyword id="KW-0547">Nucleotide-binding</keyword>
<keyword id="KW-0648">Protein biosynthesis</keyword>
<feature type="chain" id="PRO_0000151607" description="Arginine--tRNA ligase">
    <location>
        <begin position="1"/>
        <end position="553"/>
    </location>
</feature>
<feature type="short sequence motif" description="'HIGH' region">
    <location>
        <begin position="132"/>
        <end position="140"/>
    </location>
</feature>
<organism>
    <name type="scientific">Staphylococcus aureus (strain N315)</name>
    <dbReference type="NCBI Taxonomy" id="158879"/>
    <lineage>
        <taxon>Bacteria</taxon>
        <taxon>Bacillati</taxon>
        <taxon>Bacillota</taxon>
        <taxon>Bacilli</taxon>
        <taxon>Bacillales</taxon>
        <taxon>Staphylococcaceae</taxon>
        <taxon>Staphylococcus</taxon>
    </lineage>
</organism>
<comment type="catalytic activity">
    <reaction evidence="1">
        <text>tRNA(Arg) + L-arginine + ATP = L-arginyl-tRNA(Arg) + AMP + diphosphate</text>
        <dbReference type="Rhea" id="RHEA:20301"/>
        <dbReference type="Rhea" id="RHEA-COMP:9658"/>
        <dbReference type="Rhea" id="RHEA-COMP:9673"/>
        <dbReference type="ChEBI" id="CHEBI:30616"/>
        <dbReference type="ChEBI" id="CHEBI:32682"/>
        <dbReference type="ChEBI" id="CHEBI:33019"/>
        <dbReference type="ChEBI" id="CHEBI:78442"/>
        <dbReference type="ChEBI" id="CHEBI:78513"/>
        <dbReference type="ChEBI" id="CHEBI:456215"/>
        <dbReference type="EC" id="6.1.1.19"/>
    </reaction>
</comment>
<comment type="subunit">
    <text evidence="1">Monomer.</text>
</comment>
<comment type="subcellular location">
    <subcellularLocation>
        <location evidence="1">Cytoplasm</location>
    </subcellularLocation>
</comment>
<comment type="similarity">
    <text evidence="1">Belongs to the class-I aminoacyl-tRNA synthetase family.</text>
</comment>
<gene>
    <name evidence="1" type="primary">argS</name>
    <name type="ordered locus">SA0564</name>
</gene>
<accession>Q99W05</accession>
<proteinExistence type="evidence at protein level"/>
<protein>
    <recommendedName>
        <fullName evidence="1">Arginine--tRNA ligase</fullName>
        <ecNumber evidence="1">6.1.1.19</ecNumber>
    </recommendedName>
    <alternativeName>
        <fullName evidence="1">Arginyl-tRNA synthetase</fullName>
        <shortName evidence="1">ArgRS</shortName>
    </alternativeName>
</protein>
<name>SYR_STAAN</name>
<dbReference type="EC" id="6.1.1.19" evidence="1"/>
<dbReference type="EMBL" id="BA000018">
    <property type="protein sequence ID" value="BAB41796.1"/>
    <property type="molecule type" value="Genomic_DNA"/>
</dbReference>
<dbReference type="PIR" id="A89830">
    <property type="entry name" value="A89830"/>
</dbReference>
<dbReference type="RefSeq" id="WP_001021144.1">
    <property type="nucleotide sequence ID" value="NC_002745.2"/>
</dbReference>
<dbReference type="SMR" id="Q99W05"/>
<dbReference type="EnsemblBacteria" id="BAB41796">
    <property type="protein sequence ID" value="BAB41796"/>
    <property type="gene ID" value="BAB41796"/>
</dbReference>
<dbReference type="KEGG" id="sau:SA0564"/>
<dbReference type="HOGENOM" id="CLU_006406_0_1_9"/>
<dbReference type="GO" id="GO:0005737">
    <property type="term" value="C:cytoplasm"/>
    <property type="evidence" value="ECO:0007669"/>
    <property type="project" value="UniProtKB-SubCell"/>
</dbReference>
<dbReference type="GO" id="GO:0004814">
    <property type="term" value="F:arginine-tRNA ligase activity"/>
    <property type="evidence" value="ECO:0007669"/>
    <property type="project" value="UniProtKB-UniRule"/>
</dbReference>
<dbReference type="GO" id="GO:0005524">
    <property type="term" value="F:ATP binding"/>
    <property type="evidence" value="ECO:0007669"/>
    <property type="project" value="UniProtKB-UniRule"/>
</dbReference>
<dbReference type="GO" id="GO:0006420">
    <property type="term" value="P:arginyl-tRNA aminoacylation"/>
    <property type="evidence" value="ECO:0007669"/>
    <property type="project" value="UniProtKB-UniRule"/>
</dbReference>
<dbReference type="CDD" id="cd00671">
    <property type="entry name" value="ArgRS_core"/>
    <property type="match status" value="1"/>
</dbReference>
<dbReference type="FunFam" id="1.10.730.10:FF:000008">
    <property type="entry name" value="Arginine--tRNA ligase"/>
    <property type="match status" value="1"/>
</dbReference>
<dbReference type="FunFam" id="3.30.1360.70:FF:000003">
    <property type="entry name" value="Arginine--tRNA ligase"/>
    <property type="match status" value="1"/>
</dbReference>
<dbReference type="FunFam" id="3.40.50.620:FF:000062">
    <property type="entry name" value="Arginine--tRNA ligase"/>
    <property type="match status" value="1"/>
</dbReference>
<dbReference type="Gene3D" id="3.30.1360.70">
    <property type="entry name" value="Arginyl tRNA synthetase N-terminal domain"/>
    <property type="match status" value="1"/>
</dbReference>
<dbReference type="Gene3D" id="3.40.50.620">
    <property type="entry name" value="HUPs"/>
    <property type="match status" value="1"/>
</dbReference>
<dbReference type="Gene3D" id="1.10.730.10">
    <property type="entry name" value="Isoleucyl-tRNA Synthetase, Domain 1"/>
    <property type="match status" value="1"/>
</dbReference>
<dbReference type="HAMAP" id="MF_00123">
    <property type="entry name" value="Arg_tRNA_synth"/>
    <property type="match status" value="1"/>
</dbReference>
<dbReference type="InterPro" id="IPR001412">
    <property type="entry name" value="aa-tRNA-synth_I_CS"/>
</dbReference>
<dbReference type="InterPro" id="IPR001278">
    <property type="entry name" value="Arg-tRNA-ligase"/>
</dbReference>
<dbReference type="InterPro" id="IPR005148">
    <property type="entry name" value="Arg-tRNA-synth_N"/>
</dbReference>
<dbReference type="InterPro" id="IPR036695">
    <property type="entry name" value="Arg-tRNA-synth_N_sf"/>
</dbReference>
<dbReference type="InterPro" id="IPR035684">
    <property type="entry name" value="ArgRS_core"/>
</dbReference>
<dbReference type="InterPro" id="IPR008909">
    <property type="entry name" value="DALR_anticod-bd"/>
</dbReference>
<dbReference type="InterPro" id="IPR014729">
    <property type="entry name" value="Rossmann-like_a/b/a_fold"/>
</dbReference>
<dbReference type="InterPro" id="IPR009080">
    <property type="entry name" value="tRNAsynth_Ia_anticodon-bd"/>
</dbReference>
<dbReference type="NCBIfam" id="TIGR00456">
    <property type="entry name" value="argS"/>
    <property type="match status" value="1"/>
</dbReference>
<dbReference type="PANTHER" id="PTHR11956:SF5">
    <property type="entry name" value="ARGININE--TRNA LIGASE, CYTOPLASMIC"/>
    <property type="match status" value="1"/>
</dbReference>
<dbReference type="PANTHER" id="PTHR11956">
    <property type="entry name" value="ARGINYL-TRNA SYNTHETASE"/>
    <property type="match status" value="1"/>
</dbReference>
<dbReference type="Pfam" id="PF03485">
    <property type="entry name" value="Arg_tRNA_synt_N"/>
    <property type="match status" value="1"/>
</dbReference>
<dbReference type="Pfam" id="PF05746">
    <property type="entry name" value="DALR_1"/>
    <property type="match status" value="1"/>
</dbReference>
<dbReference type="Pfam" id="PF00750">
    <property type="entry name" value="tRNA-synt_1d"/>
    <property type="match status" value="1"/>
</dbReference>
<dbReference type="PRINTS" id="PR01038">
    <property type="entry name" value="TRNASYNTHARG"/>
</dbReference>
<dbReference type="SMART" id="SM01016">
    <property type="entry name" value="Arg_tRNA_synt_N"/>
    <property type="match status" value="1"/>
</dbReference>
<dbReference type="SMART" id="SM00836">
    <property type="entry name" value="DALR_1"/>
    <property type="match status" value="1"/>
</dbReference>
<dbReference type="SUPFAM" id="SSF47323">
    <property type="entry name" value="Anticodon-binding domain of a subclass of class I aminoacyl-tRNA synthetases"/>
    <property type="match status" value="1"/>
</dbReference>
<dbReference type="SUPFAM" id="SSF55190">
    <property type="entry name" value="Arginyl-tRNA synthetase (ArgRS), N-terminal 'additional' domain"/>
    <property type="match status" value="1"/>
</dbReference>
<dbReference type="SUPFAM" id="SSF52374">
    <property type="entry name" value="Nucleotidylyl transferase"/>
    <property type="match status" value="1"/>
</dbReference>
<dbReference type="PROSITE" id="PS00178">
    <property type="entry name" value="AA_TRNA_LIGASE_I"/>
    <property type="match status" value="1"/>
</dbReference>